<sequence length="317" mass="34164">MAKKVGVLLFIDLQPLPDSVEQWVKKTYHAELSGGATLQIVFNTQEACKLDVGTSVEAVVSLMHTPGRHSPSFLAEVARVLNPGGSFLVLEPLLVETQEQKYSSTQTNAGLERNLLLAGFVNSEVDFVTGVEIAKACTTSSVALNLVAVKSKKPSWDSASVFQLRKGSSQKGRARTNGNHQPVKFTAGDVMDDVLSMSKSVVKLDLTSNFKDDDEELIDEDDLLTEEDLKAPEIPKAESCAPTKKACKNCTCGRAELEEKEEETKLTAAQINNPTSSCGSCGLGDAFRCAGCPYRGMPTFKLGEKITLGESWLVADA</sequence>
<protein>
    <recommendedName>
        <fullName evidence="1">Anamorsin homolog 2</fullName>
    </recommendedName>
    <alternativeName>
        <fullName evidence="1">Fe-S cluster assembly protein DRE2 homolog 2</fullName>
    </alternativeName>
</protein>
<accession>A9SUX2</accession>
<gene>
    <name type="ORF">PHYPADRAFT_215969</name>
</gene>
<organism>
    <name type="scientific">Physcomitrium patens</name>
    <name type="common">Spreading-leaved earth moss</name>
    <name type="synonym">Physcomitrella patens</name>
    <dbReference type="NCBI Taxonomy" id="3218"/>
    <lineage>
        <taxon>Eukaryota</taxon>
        <taxon>Viridiplantae</taxon>
        <taxon>Streptophyta</taxon>
        <taxon>Embryophyta</taxon>
        <taxon>Bryophyta</taxon>
        <taxon>Bryophytina</taxon>
        <taxon>Bryopsida</taxon>
        <taxon>Funariidae</taxon>
        <taxon>Funariales</taxon>
        <taxon>Funariaceae</taxon>
        <taxon>Physcomitrium</taxon>
    </lineage>
</organism>
<feature type="chain" id="PRO_0000392343" description="Anamorsin homolog 2">
    <location>
        <begin position="1"/>
        <end position="317"/>
    </location>
</feature>
<feature type="region of interest" description="N-terminal SAM-like domain" evidence="1">
    <location>
        <begin position="1"/>
        <end position="162"/>
    </location>
</feature>
<feature type="region of interest" description="Linker" evidence="1">
    <location>
        <begin position="163"/>
        <end position="229"/>
    </location>
</feature>
<feature type="region of interest" description="Fe-S binding site A" evidence="1">
    <location>
        <begin position="240"/>
        <end position="252"/>
    </location>
</feature>
<feature type="region of interest" description="Fe-S binding site B" evidence="1">
    <location>
        <begin position="278"/>
        <end position="292"/>
    </location>
</feature>
<feature type="short sequence motif" description="Cx2C motif 1" evidence="1">
    <location>
        <begin position="278"/>
        <end position="281"/>
    </location>
</feature>
<feature type="short sequence motif" description="Cx2C motif 2" evidence="1">
    <location>
        <begin position="289"/>
        <end position="292"/>
    </location>
</feature>
<feature type="binding site" evidence="1">
    <location>
        <position position="240"/>
    </location>
    <ligand>
        <name>[2Fe-2S] cluster</name>
        <dbReference type="ChEBI" id="CHEBI:190135"/>
    </ligand>
</feature>
<feature type="binding site" evidence="1">
    <location>
        <position position="247"/>
    </location>
    <ligand>
        <name>[2Fe-2S] cluster</name>
        <dbReference type="ChEBI" id="CHEBI:190135"/>
    </ligand>
</feature>
<feature type="binding site" evidence="1">
    <location>
        <position position="250"/>
    </location>
    <ligand>
        <name>[2Fe-2S] cluster</name>
        <dbReference type="ChEBI" id="CHEBI:190135"/>
    </ligand>
</feature>
<feature type="binding site" evidence="1">
    <location>
        <position position="252"/>
    </location>
    <ligand>
        <name>[2Fe-2S] cluster</name>
        <dbReference type="ChEBI" id="CHEBI:190135"/>
    </ligand>
</feature>
<feature type="binding site" evidence="1">
    <location>
        <position position="278"/>
    </location>
    <ligand>
        <name>[4Fe-4S] cluster</name>
        <dbReference type="ChEBI" id="CHEBI:49883"/>
    </ligand>
</feature>
<feature type="binding site" evidence="1">
    <location>
        <position position="281"/>
    </location>
    <ligand>
        <name>[4Fe-4S] cluster</name>
        <dbReference type="ChEBI" id="CHEBI:49883"/>
    </ligand>
</feature>
<feature type="binding site" evidence="1">
    <location>
        <position position="289"/>
    </location>
    <ligand>
        <name>[4Fe-4S] cluster</name>
        <dbReference type="ChEBI" id="CHEBI:49883"/>
    </ligand>
</feature>
<feature type="binding site" evidence="1">
    <location>
        <position position="292"/>
    </location>
    <ligand>
        <name>[4Fe-4S] cluster</name>
        <dbReference type="ChEBI" id="CHEBI:49883"/>
    </ligand>
</feature>
<keyword id="KW-0001">2Fe-2S</keyword>
<keyword id="KW-0004">4Fe-4S</keyword>
<keyword id="KW-0963">Cytoplasm</keyword>
<keyword id="KW-0408">Iron</keyword>
<keyword id="KW-0411">Iron-sulfur</keyword>
<keyword id="KW-0479">Metal-binding</keyword>
<keyword id="KW-0496">Mitochondrion</keyword>
<keyword id="KW-1185">Reference proteome</keyword>
<dbReference type="EMBL" id="DS545011">
    <property type="protein sequence ID" value="EDQ64985.1"/>
    <property type="molecule type" value="Genomic_DNA"/>
</dbReference>
<dbReference type="RefSeq" id="XP_001770151.1">
    <property type="nucleotide sequence ID" value="XM_001770099.1"/>
</dbReference>
<dbReference type="SMR" id="A9SUX2"/>
<dbReference type="FunCoup" id="A9SUX2">
    <property type="interactions" value="4203"/>
</dbReference>
<dbReference type="PaxDb" id="3218-PP1S122_25V6.1"/>
<dbReference type="EnsemblPlants" id="Pp3c8_19850V3.1">
    <property type="protein sequence ID" value="Pp3c8_19850V3.1"/>
    <property type="gene ID" value="Pp3c8_19850"/>
</dbReference>
<dbReference type="EnsemblPlants" id="Pp3c8_19850V3.2">
    <property type="protein sequence ID" value="Pp3c8_19850V3.2"/>
    <property type="gene ID" value="Pp3c8_19850"/>
</dbReference>
<dbReference type="EnsemblPlants" id="Pp3c8_19850V3.3">
    <property type="protein sequence ID" value="Pp3c8_19850V3.3"/>
    <property type="gene ID" value="Pp3c8_19850"/>
</dbReference>
<dbReference type="Gramene" id="Pp3c8_19850V3.1">
    <property type="protein sequence ID" value="Pp3c8_19850V3.1"/>
    <property type="gene ID" value="Pp3c8_19850"/>
</dbReference>
<dbReference type="Gramene" id="Pp3c8_19850V3.2">
    <property type="protein sequence ID" value="Pp3c8_19850V3.2"/>
    <property type="gene ID" value="Pp3c8_19850"/>
</dbReference>
<dbReference type="Gramene" id="Pp3c8_19850V3.3">
    <property type="protein sequence ID" value="Pp3c8_19850V3.3"/>
    <property type="gene ID" value="Pp3c8_19850"/>
</dbReference>
<dbReference type="eggNOG" id="KOG4020">
    <property type="taxonomic scope" value="Eukaryota"/>
</dbReference>
<dbReference type="HOGENOM" id="CLU_064393_0_0_1"/>
<dbReference type="InParanoid" id="A9SUX2"/>
<dbReference type="OMA" id="PNVGDCE"/>
<dbReference type="OrthoDB" id="311633at2759"/>
<dbReference type="Proteomes" id="UP000006727">
    <property type="component" value="Chromosome 8"/>
</dbReference>
<dbReference type="GO" id="GO:0005737">
    <property type="term" value="C:cytoplasm"/>
    <property type="evidence" value="ECO:0000318"/>
    <property type="project" value="GO_Central"/>
</dbReference>
<dbReference type="GO" id="GO:0005758">
    <property type="term" value="C:mitochondrial intermembrane space"/>
    <property type="evidence" value="ECO:0007669"/>
    <property type="project" value="UniProtKB-SubCell"/>
</dbReference>
<dbReference type="GO" id="GO:0051537">
    <property type="term" value="F:2 iron, 2 sulfur cluster binding"/>
    <property type="evidence" value="ECO:0007669"/>
    <property type="project" value="UniProtKB-UniRule"/>
</dbReference>
<dbReference type="GO" id="GO:0051539">
    <property type="term" value="F:4 iron, 4 sulfur cluster binding"/>
    <property type="evidence" value="ECO:0007669"/>
    <property type="project" value="UniProtKB-KW"/>
</dbReference>
<dbReference type="GO" id="GO:0009055">
    <property type="term" value="F:electron transfer activity"/>
    <property type="evidence" value="ECO:0007669"/>
    <property type="project" value="UniProtKB-UniRule"/>
</dbReference>
<dbReference type="GO" id="GO:0046872">
    <property type="term" value="F:metal ion binding"/>
    <property type="evidence" value="ECO:0007669"/>
    <property type="project" value="UniProtKB-KW"/>
</dbReference>
<dbReference type="GO" id="GO:0016226">
    <property type="term" value="P:iron-sulfur cluster assembly"/>
    <property type="evidence" value="ECO:0000318"/>
    <property type="project" value="GO_Central"/>
</dbReference>
<dbReference type="FunFam" id="3.40.50.150:FF:000740">
    <property type="entry name" value="Anamorsin homolog 1"/>
    <property type="match status" value="1"/>
</dbReference>
<dbReference type="Gene3D" id="3.40.50.150">
    <property type="entry name" value="Vaccinia Virus protein VP39"/>
    <property type="match status" value="1"/>
</dbReference>
<dbReference type="HAMAP" id="MF_03115">
    <property type="entry name" value="Anamorsin"/>
    <property type="match status" value="1"/>
</dbReference>
<dbReference type="InterPro" id="IPR007785">
    <property type="entry name" value="Anamorsin"/>
</dbReference>
<dbReference type="InterPro" id="IPR049011">
    <property type="entry name" value="Anamorsin_N_metazoan"/>
</dbReference>
<dbReference type="InterPro" id="IPR046408">
    <property type="entry name" value="CIAPIN1"/>
</dbReference>
<dbReference type="InterPro" id="IPR029063">
    <property type="entry name" value="SAM-dependent_MTases_sf"/>
</dbReference>
<dbReference type="PANTHER" id="PTHR13273">
    <property type="entry name" value="ANAMORSIN"/>
    <property type="match status" value="1"/>
</dbReference>
<dbReference type="PANTHER" id="PTHR13273:SF14">
    <property type="entry name" value="ANAMORSIN"/>
    <property type="match status" value="1"/>
</dbReference>
<dbReference type="Pfam" id="PF20922">
    <property type="entry name" value="Anamorsin_N"/>
    <property type="match status" value="1"/>
</dbReference>
<dbReference type="Pfam" id="PF05093">
    <property type="entry name" value="CIAPIN1"/>
    <property type="match status" value="1"/>
</dbReference>
<dbReference type="SUPFAM" id="SSF53335">
    <property type="entry name" value="S-adenosyl-L-methionine-dependent methyltransferases"/>
    <property type="match status" value="1"/>
</dbReference>
<comment type="function">
    <text evidence="1">Component of the cytosolic iron-sulfur (Fe-S) protein assembly (CIA) machinery. Required for the maturation of extramitochondrial Fe-S proteins. Part of an electron transfer chain functioning in an early step of cytosolic Fe-S biogenesis, facilitating the de novo assembly of a [4Fe-4S] cluster on the cytosolic Fe-S scaffold complex. Electrons are transferred from NADPH via a FAD- and FMN-containing diflavin oxidoreductase. Together with the diflavin oxidoreductase, also required for the assembly of the diferric tyrosyl radical cofactor of ribonucleotide reductase (RNR), probably by providing electrons for reduction during radical cofactor maturation in the catalytic small subunit.</text>
</comment>
<comment type="cofactor">
    <cofactor evidence="1">
        <name>[2Fe-2S] cluster</name>
        <dbReference type="ChEBI" id="CHEBI:190135"/>
    </cofactor>
</comment>
<comment type="cofactor">
    <cofactor evidence="1">
        <name>[4Fe-4S] cluster</name>
        <dbReference type="ChEBI" id="CHEBI:49883"/>
    </cofactor>
</comment>
<comment type="subunit">
    <text evidence="1">Monomer.</text>
</comment>
<comment type="subcellular location">
    <subcellularLocation>
        <location evidence="1">Cytoplasm</location>
    </subcellularLocation>
    <subcellularLocation>
        <location evidence="1">Mitochondrion intermembrane space</location>
    </subcellularLocation>
</comment>
<comment type="domain">
    <text evidence="1">The C-terminal domain binds 2 Fe-S clusters but is otherwise mostly in an intrinsically disordered conformation.</text>
</comment>
<comment type="domain">
    <text evidence="1">The N-terminal domain has structural similarity with S-adenosyl-L-methionine-dependent methyltransferases, but does not bind S-adenosyl-L-methionine. It is required for correct assembly of the 2 Fe-S clusters.</text>
</comment>
<comment type="domain">
    <text evidence="1">The twin Cx2C motifs are involved in the recognition by the mitochondrial MIA40-ERV1 disulfide relay system. The formation of 2 disulfide bonds in the Cx2C motifs through dithiol/disulfide exchange reactions effectively traps the protein in the mitochondrial intermembrane space.</text>
</comment>
<comment type="similarity">
    <text evidence="1">Belongs to the anamorsin family.</text>
</comment>
<name>DRE22_PHYPA</name>
<evidence type="ECO:0000255" key="1">
    <source>
        <dbReference type="HAMAP-Rule" id="MF_03115"/>
    </source>
</evidence>
<proteinExistence type="inferred from homology"/>
<reference key="1">
    <citation type="journal article" date="2008" name="Science">
        <title>The Physcomitrella genome reveals evolutionary insights into the conquest of land by plants.</title>
        <authorList>
            <person name="Rensing S.A."/>
            <person name="Lang D."/>
            <person name="Zimmer A.D."/>
            <person name="Terry A."/>
            <person name="Salamov A."/>
            <person name="Shapiro H."/>
            <person name="Nishiyama T."/>
            <person name="Perroud P.-F."/>
            <person name="Lindquist E.A."/>
            <person name="Kamisugi Y."/>
            <person name="Tanahashi T."/>
            <person name="Sakakibara K."/>
            <person name="Fujita T."/>
            <person name="Oishi K."/>
            <person name="Shin-I T."/>
            <person name="Kuroki Y."/>
            <person name="Toyoda A."/>
            <person name="Suzuki Y."/>
            <person name="Hashimoto S.-I."/>
            <person name="Yamaguchi K."/>
            <person name="Sugano S."/>
            <person name="Kohara Y."/>
            <person name="Fujiyama A."/>
            <person name="Anterola A."/>
            <person name="Aoki S."/>
            <person name="Ashton N."/>
            <person name="Barbazuk W.B."/>
            <person name="Barker E."/>
            <person name="Bennetzen J.L."/>
            <person name="Blankenship R."/>
            <person name="Cho S.H."/>
            <person name="Dutcher S.K."/>
            <person name="Estelle M."/>
            <person name="Fawcett J.A."/>
            <person name="Gundlach H."/>
            <person name="Hanada K."/>
            <person name="Heyl A."/>
            <person name="Hicks K.A."/>
            <person name="Hughes J."/>
            <person name="Lohr M."/>
            <person name="Mayer K."/>
            <person name="Melkozernov A."/>
            <person name="Murata T."/>
            <person name="Nelson D.R."/>
            <person name="Pils B."/>
            <person name="Prigge M."/>
            <person name="Reiss B."/>
            <person name="Renner T."/>
            <person name="Rombauts S."/>
            <person name="Rushton P.J."/>
            <person name="Sanderfoot A."/>
            <person name="Schween G."/>
            <person name="Shiu S.-H."/>
            <person name="Stueber K."/>
            <person name="Theodoulou F.L."/>
            <person name="Tu H."/>
            <person name="Van de Peer Y."/>
            <person name="Verrier P.J."/>
            <person name="Waters E."/>
            <person name="Wood A."/>
            <person name="Yang L."/>
            <person name="Cove D."/>
            <person name="Cuming A.C."/>
            <person name="Hasebe M."/>
            <person name="Lucas S."/>
            <person name="Mishler B.D."/>
            <person name="Reski R."/>
            <person name="Grigoriev I.V."/>
            <person name="Quatrano R.S."/>
            <person name="Boore J.L."/>
        </authorList>
    </citation>
    <scope>NUCLEOTIDE SEQUENCE [LARGE SCALE GENOMIC DNA]</scope>
    <source>
        <strain>cv. Gransden 2004</strain>
    </source>
</reference>